<dbReference type="EC" id="3.1.26.4" evidence="1"/>
<dbReference type="EMBL" id="AE016826">
    <property type="protein sequence ID" value="AAO26957.1"/>
    <property type="molecule type" value="Genomic_DNA"/>
</dbReference>
<dbReference type="RefSeq" id="WP_011091358.1">
    <property type="nucleotide sequence ID" value="NC_004545.1"/>
</dbReference>
<dbReference type="SMR" id="P59434"/>
<dbReference type="STRING" id="224915.bbp_229"/>
<dbReference type="KEGG" id="bab:bbp_229"/>
<dbReference type="eggNOG" id="COG0328">
    <property type="taxonomic scope" value="Bacteria"/>
</dbReference>
<dbReference type="HOGENOM" id="CLU_030894_6_0_6"/>
<dbReference type="OrthoDB" id="7845843at2"/>
<dbReference type="Proteomes" id="UP000000601">
    <property type="component" value="Chromosome"/>
</dbReference>
<dbReference type="GO" id="GO:0005737">
    <property type="term" value="C:cytoplasm"/>
    <property type="evidence" value="ECO:0007669"/>
    <property type="project" value="UniProtKB-SubCell"/>
</dbReference>
<dbReference type="GO" id="GO:0000287">
    <property type="term" value="F:magnesium ion binding"/>
    <property type="evidence" value="ECO:0007669"/>
    <property type="project" value="UniProtKB-UniRule"/>
</dbReference>
<dbReference type="GO" id="GO:0003676">
    <property type="term" value="F:nucleic acid binding"/>
    <property type="evidence" value="ECO:0007669"/>
    <property type="project" value="InterPro"/>
</dbReference>
<dbReference type="GO" id="GO:0004523">
    <property type="term" value="F:RNA-DNA hybrid ribonuclease activity"/>
    <property type="evidence" value="ECO:0007669"/>
    <property type="project" value="UniProtKB-UniRule"/>
</dbReference>
<dbReference type="GO" id="GO:0043137">
    <property type="term" value="P:DNA replication, removal of RNA primer"/>
    <property type="evidence" value="ECO:0007669"/>
    <property type="project" value="TreeGrafter"/>
</dbReference>
<dbReference type="CDD" id="cd09278">
    <property type="entry name" value="RNase_HI_prokaryote_like"/>
    <property type="match status" value="1"/>
</dbReference>
<dbReference type="Gene3D" id="3.30.420.10">
    <property type="entry name" value="Ribonuclease H-like superfamily/Ribonuclease H"/>
    <property type="match status" value="1"/>
</dbReference>
<dbReference type="HAMAP" id="MF_00042">
    <property type="entry name" value="RNase_H"/>
    <property type="match status" value="1"/>
</dbReference>
<dbReference type="InterPro" id="IPR050092">
    <property type="entry name" value="RNase_H"/>
</dbReference>
<dbReference type="InterPro" id="IPR012337">
    <property type="entry name" value="RNaseH-like_sf"/>
</dbReference>
<dbReference type="InterPro" id="IPR002156">
    <property type="entry name" value="RNaseH_domain"/>
</dbReference>
<dbReference type="InterPro" id="IPR036397">
    <property type="entry name" value="RNaseH_sf"/>
</dbReference>
<dbReference type="InterPro" id="IPR022892">
    <property type="entry name" value="RNaseHI"/>
</dbReference>
<dbReference type="NCBIfam" id="NF001236">
    <property type="entry name" value="PRK00203.1"/>
    <property type="match status" value="1"/>
</dbReference>
<dbReference type="PANTHER" id="PTHR10642">
    <property type="entry name" value="RIBONUCLEASE H1"/>
    <property type="match status" value="1"/>
</dbReference>
<dbReference type="PANTHER" id="PTHR10642:SF26">
    <property type="entry name" value="RIBONUCLEASE H1"/>
    <property type="match status" value="1"/>
</dbReference>
<dbReference type="Pfam" id="PF00075">
    <property type="entry name" value="RNase_H"/>
    <property type="match status" value="1"/>
</dbReference>
<dbReference type="SUPFAM" id="SSF53098">
    <property type="entry name" value="Ribonuclease H-like"/>
    <property type="match status" value="1"/>
</dbReference>
<dbReference type="PROSITE" id="PS50879">
    <property type="entry name" value="RNASE_H_1"/>
    <property type="match status" value="1"/>
</dbReference>
<name>RNH_BUCBP</name>
<sequence length="153" mass="17671">MLKTIKIFSDGSCLGNPGPGGYSFIIQHLEYENISSSGFYLTTNNRMELMGIIVATESLKQPCCITISTDSQYVQKGILYWIKNWKTKGWKTSRKTYVKNVDLWLRLEKSLNLHQVTWKWIKSHSGNKKNEQCDHLARESAKFPTLKDFGYIL</sequence>
<feature type="chain" id="PRO_0000195368" description="Ribonuclease H">
    <location>
        <begin position="1"/>
        <end position="153"/>
    </location>
</feature>
<feature type="domain" description="RNase H type-1" evidence="2">
    <location>
        <begin position="1"/>
        <end position="142"/>
    </location>
</feature>
<feature type="binding site" evidence="1">
    <location>
        <position position="10"/>
    </location>
    <ligand>
        <name>Mg(2+)</name>
        <dbReference type="ChEBI" id="CHEBI:18420"/>
        <label>1</label>
    </ligand>
</feature>
<feature type="binding site" evidence="1">
    <location>
        <position position="10"/>
    </location>
    <ligand>
        <name>Mg(2+)</name>
        <dbReference type="ChEBI" id="CHEBI:18420"/>
        <label>2</label>
    </ligand>
</feature>
<feature type="binding site" evidence="1">
    <location>
        <position position="48"/>
    </location>
    <ligand>
        <name>Mg(2+)</name>
        <dbReference type="ChEBI" id="CHEBI:18420"/>
        <label>1</label>
    </ligand>
</feature>
<feature type="binding site" evidence="1">
    <location>
        <position position="70"/>
    </location>
    <ligand>
        <name>Mg(2+)</name>
        <dbReference type="ChEBI" id="CHEBI:18420"/>
        <label>1</label>
    </ligand>
</feature>
<feature type="binding site" evidence="1">
    <location>
        <position position="134"/>
    </location>
    <ligand>
        <name>Mg(2+)</name>
        <dbReference type="ChEBI" id="CHEBI:18420"/>
        <label>2</label>
    </ligand>
</feature>
<comment type="function">
    <text evidence="1">Endonuclease that specifically degrades the RNA of RNA-DNA hybrids.</text>
</comment>
<comment type="catalytic activity">
    <reaction evidence="1">
        <text>Endonucleolytic cleavage to 5'-phosphomonoester.</text>
        <dbReference type="EC" id="3.1.26.4"/>
    </reaction>
</comment>
<comment type="cofactor">
    <cofactor evidence="1">
        <name>Mg(2+)</name>
        <dbReference type="ChEBI" id="CHEBI:18420"/>
    </cofactor>
    <text evidence="1">Binds 1 Mg(2+) ion per subunit. May bind a second metal ion at a regulatory site, or after substrate binding.</text>
</comment>
<comment type="subunit">
    <text evidence="1">Monomer.</text>
</comment>
<comment type="subcellular location">
    <subcellularLocation>
        <location evidence="1">Cytoplasm</location>
    </subcellularLocation>
</comment>
<comment type="similarity">
    <text evidence="1">Belongs to the RNase H family.</text>
</comment>
<reference key="1">
    <citation type="journal article" date="2003" name="Proc. Natl. Acad. Sci. U.S.A.">
        <title>Reductive genome evolution in Buchnera aphidicola.</title>
        <authorList>
            <person name="van Ham R.C.H.J."/>
            <person name="Kamerbeek J."/>
            <person name="Palacios C."/>
            <person name="Rausell C."/>
            <person name="Abascal F."/>
            <person name="Bastolla U."/>
            <person name="Fernandez J.M."/>
            <person name="Jimenez L."/>
            <person name="Postigo M."/>
            <person name="Silva F.J."/>
            <person name="Tamames J."/>
            <person name="Viguera E."/>
            <person name="Latorre A."/>
            <person name="Valencia A."/>
            <person name="Moran F."/>
            <person name="Moya A."/>
        </authorList>
    </citation>
    <scope>NUCLEOTIDE SEQUENCE [LARGE SCALE GENOMIC DNA]</scope>
    <source>
        <strain>Bp</strain>
    </source>
</reference>
<protein>
    <recommendedName>
        <fullName evidence="1">Ribonuclease H</fullName>
        <shortName evidence="1">RNase H</shortName>
        <ecNumber evidence="1">3.1.26.4</ecNumber>
    </recommendedName>
</protein>
<proteinExistence type="inferred from homology"/>
<organism>
    <name type="scientific">Buchnera aphidicola subsp. Baizongia pistaciae (strain Bp)</name>
    <dbReference type="NCBI Taxonomy" id="224915"/>
    <lineage>
        <taxon>Bacteria</taxon>
        <taxon>Pseudomonadati</taxon>
        <taxon>Pseudomonadota</taxon>
        <taxon>Gammaproteobacteria</taxon>
        <taxon>Enterobacterales</taxon>
        <taxon>Erwiniaceae</taxon>
        <taxon>Buchnera</taxon>
    </lineage>
</organism>
<accession>P59434</accession>
<keyword id="KW-0963">Cytoplasm</keyword>
<keyword id="KW-0255">Endonuclease</keyword>
<keyword id="KW-0378">Hydrolase</keyword>
<keyword id="KW-0460">Magnesium</keyword>
<keyword id="KW-0479">Metal-binding</keyword>
<keyword id="KW-0540">Nuclease</keyword>
<keyword id="KW-1185">Reference proteome</keyword>
<evidence type="ECO:0000255" key="1">
    <source>
        <dbReference type="HAMAP-Rule" id="MF_00042"/>
    </source>
</evidence>
<evidence type="ECO:0000255" key="2">
    <source>
        <dbReference type="PROSITE-ProRule" id="PRU00408"/>
    </source>
</evidence>
<gene>
    <name evidence="1" type="primary">rnhA</name>
    <name type="ordered locus">bbp_229</name>
</gene>